<keyword id="KW-0067">ATP-binding</keyword>
<keyword id="KW-0436">Ligase</keyword>
<keyword id="KW-0547">Nucleotide-binding</keyword>
<keyword id="KW-0658">Purine biosynthesis</keyword>
<keyword id="KW-1185">Reference proteome</keyword>
<accession>B1VIK2</accession>
<protein>
    <recommendedName>
        <fullName evidence="1">Phosphoribosylaminoimidazole-succinocarboxamide synthase</fullName>
        <ecNumber evidence="1">6.3.2.6</ecNumber>
    </recommendedName>
    <alternativeName>
        <fullName evidence="1">SAICAR synthetase</fullName>
    </alternativeName>
</protein>
<sequence>MRPELSDYEHISAGKVREIYEIDAEHLLMVVTDRISAYDFVLDTDIPDKGRVLTAMSAYFFEQIDFPNHLAGPLDDERIPEEVLGRAMVCRKLDMVPFECVARGYLTGSGLKEYEATGAVCGVKLPEGLVEASKLDEPIFTPATKAEIGDHDENVGFDVVVKDLGEDLAERLRTATLEIYSQAAKMAEEKGLILADTKFEFGLDKEGNLVLADEVLTPDSSRYWPAEGYEEGKVQPSFDKQFVRNWLTGPKSGWDKNDGSQPPELPGSVVEATRARYVEAYERISGKRFADWIGSCV</sequence>
<organism>
    <name type="scientific">Corynebacterium urealyticum (strain ATCC 43042 / DSM 7109)</name>
    <dbReference type="NCBI Taxonomy" id="504474"/>
    <lineage>
        <taxon>Bacteria</taxon>
        <taxon>Bacillati</taxon>
        <taxon>Actinomycetota</taxon>
        <taxon>Actinomycetes</taxon>
        <taxon>Mycobacteriales</taxon>
        <taxon>Corynebacteriaceae</taxon>
        <taxon>Corynebacterium</taxon>
    </lineage>
</organism>
<name>PUR7_CORU7</name>
<dbReference type="EC" id="6.3.2.6" evidence="1"/>
<dbReference type="EMBL" id="AM942444">
    <property type="protein sequence ID" value="CAQ05586.1"/>
    <property type="molecule type" value="Genomic_DNA"/>
</dbReference>
<dbReference type="RefSeq" id="WP_012360862.1">
    <property type="nucleotide sequence ID" value="NC_010545.1"/>
</dbReference>
<dbReference type="SMR" id="B1VIK2"/>
<dbReference type="STRING" id="504474.cu1626"/>
<dbReference type="GeneID" id="60604412"/>
<dbReference type="KEGG" id="cur:cu1626"/>
<dbReference type="eggNOG" id="COG0152">
    <property type="taxonomic scope" value="Bacteria"/>
</dbReference>
<dbReference type="HOGENOM" id="CLU_045637_0_0_11"/>
<dbReference type="UniPathway" id="UPA00074">
    <property type="reaction ID" value="UER00131"/>
</dbReference>
<dbReference type="Proteomes" id="UP000001727">
    <property type="component" value="Chromosome"/>
</dbReference>
<dbReference type="GO" id="GO:0005737">
    <property type="term" value="C:cytoplasm"/>
    <property type="evidence" value="ECO:0007669"/>
    <property type="project" value="TreeGrafter"/>
</dbReference>
<dbReference type="GO" id="GO:0005524">
    <property type="term" value="F:ATP binding"/>
    <property type="evidence" value="ECO:0007669"/>
    <property type="project" value="UniProtKB-KW"/>
</dbReference>
<dbReference type="GO" id="GO:0004639">
    <property type="term" value="F:phosphoribosylaminoimidazolesuccinocarboxamide synthase activity"/>
    <property type="evidence" value="ECO:0007669"/>
    <property type="project" value="UniProtKB-UniRule"/>
</dbReference>
<dbReference type="GO" id="GO:0006189">
    <property type="term" value="P:'de novo' IMP biosynthetic process"/>
    <property type="evidence" value="ECO:0007669"/>
    <property type="project" value="UniProtKB-UniRule"/>
</dbReference>
<dbReference type="CDD" id="cd01414">
    <property type="entry name" value="SAICAR_synt_Sc"/>
    <property type="match status" value="1"/>
</dbReference>
<dbReference type="FunFam" id="3.30.470.20:FF:000015">
    <property type="entry name" value="Phosphoribosylaminoimidazole-succinocarboxamide synthase"/>
    <property type="match status" value="1"/>
</dbReference>
<dbReference type="Gene3D" id="3.30.470.20">
    <property type="entry name" value="ATP-grasp fold, B domain"/>
    <property type="match status" value="1"/>
</dbReference>
<dbReference type="Gene3D" id="3.30.200.20">
    <property type="entry name" value="Phosphorylase Kinase, domain 1"/>
    <property type="match status" value="1"/>
</dbReference>
<dbReference type="HAMAP" id="MF_00137">
    <property type="entry name" value="SAICAR_synth"/>
    <property type="match status" value="1"/>
</dbReference>
<dbReference type="InterPro" id="IPR028923">
    <property type="entry name" value="SAICAR_synt/ADE2_N"/>
</dbReference>
<dbReference type="InterPro" id="IPR001636">
    <property type="entry name" value="SAICAR_synth"/>
</dbReference>
<dbReference type="InterPro" id="IPR018236">
    <property type="entry name" value="SAICAR_synthetase_CS"/>
</dbReference>
<dbReference type="NCBIfam" id="NF010568">
    <property type="entry name" value="PRK13961.1"/>
    <property type="match status" value="1"/>
</dbReference>
<dbReference type="NCBIfam" id="TIGR00081">
    <property type="entry name" value="purC"/>
    <property type="match status" value="1"/>
</dbReference>
<dbReference type="PANTHER" id="PTHR43700">
    <property type="entry name" value="PHOSPHORIBOSYLAMINOIMIDAZOLE-SUCCINOCARBOXAMIDE SYNTHASE"/>
    <property type="match status" value="1"/>
</dbReference>
<dbReference type="PANTHER" id="PTHR43700:SF1">
    <property type="entry name" value="PHOSPHORIBOSYLAMINOIMIDAZOLE-SUCCINOCARBOXAMIDE SYNTHASE"/>
    <property type="match status" value="1"/>
</dbReference>
<dbReference type="Pfam" id="PF01259">
    <property type="entry name" value="SAICAR_synt"/>
    <property type="match status" value="1"/>
</dbReference>
<dbReference type="SUPFAM" id="SSF56104">
    <property type="entry name" value="SAICAR synthase-like"/>
    <property type="match status" value="1"/>
</dbReference>
<dbReference type="PROSITE" id="PS01057">
    <property type="entry name" value="SAICAR_SYNTHETASE_1"/>
    <property type="match status" value="1"/>
</dbReference>
<dbReference type="PROSITE" id="PS01058">
    <property type="entry name" value="SAICAR_SYNTHETASE_2"/>
    <property type="match status" value="1"/>
</dbReference>
<comment type="catalytic activity">
    <reaction evidence="1">
        <text>5-amino-1-(5-phospho-D-ribosyl)imidazole-4-carboxylate + L-aspartate + ATP = (2S)-2-[5-amino-1-(5-phospho-beta-D-ribosyl)imidazole-4-carboxamido]succinate + ADP + phosphate + 2 H(+)</text>
        <dbReference type="Rhea" id="RHEA:22628"/>
        <dbReference type="ChEBI" id="CHEBI:15378"/>
        <dbReference type="ChEBI" id="CHEBI:29991"/>
        <dbReference type="ChEBI" id="CHEBI:30616"/>
        <dbReference type="ChEBI" id="CHEBI:43474"/>
        <dbReference type="ChEBI" id="CHEBI:58443"/>
        <dbReference type="ChEBI" id="CHEBI:77657"/>
        <dbReference type="ChEBI" id="CHEBI:456216"/>
        <dbReference type="EC" id="6.3.2.6"/>
    </reaction>
</comment>
<comment type="pathway">
    <text evidence="1">Purine metabolism; IMP biosynthesis via de novo pathway; 5-amino-1-(5-phospho-D-ribosyl)imidazole-4-carboxamide from 5-amino-1-(5-phospho-D-ribosyl)imidazole-4-carboxylate: step 1/2.</text>
</comment>
<comment type="similarity">
    <text evidence="1">Belongs to the SAICAR synthetase family.</text>
</comment>
<gene>
    <name evidence="1" type="primary">purC</name>
    <name type="ordered locus">cu1626</name>
</gene>
<proteinExistence type="inferred from homology"/>
<feature type="chain" id="PRO_1000095978" description="Phosphoribosylaminoimidazole-succinocarboxamide synthase">
    <location>
        <begin position="1"/>
        <end position="297"/>
    </location>
</feature>
<evidence type="ECO:0000255" key="1">
    <source>
        <dbReference type="HAMAP-Rule" id="MF_00137"/>
    </source>
</evidence>
<reference key="1">
    <citation type="journal article" date="2008" name="J. Biotechnol.">
        <title>The lifestyle of Corynebacterium urealyticum derived from its complete genome sequence established by pyrosequencing.</title>
        <authorList>
            <person name="Tauch A."/>
            <person name="Trost E."/>
            <person name="Tilker A."/>
            <person name="Ludewig U."/>
            <person name="Schneiker S."/>
            <person name="Goesmann A."/>
            <person name="Arnold W."/>
            <person name="Bekel T."/>
            <person name="Brinkrolf K."/>
            <person name="Brune I."/>
            <person name="Goetker S."/>
            <person name="Kalinowski J."/>
            <person name="Kamp P.-B."/>
            <person name="Lobo F.P."/>
            <person name="Viehoever P."/>
            <person name="Weisshaar B."/>
            <person name="Soriano F."/>
            <person name="Droege M."/>
            <person name="Puehler A."/>
        </authorList>
    </citation>
    <scope>NUCLEOTIDE SEQUENCE [LARGE SCALE GENOMIC DNA]</scope>
    <source>
        <strain>ATCC 43042 / DSM 7109</strain>
    </source>
</reference>